<protein>
    <recommendedName>
        <fullName>2-oxoglutarate-dependent ethylene/succinate-forming enzyme</fullName>
        <shortName>EFE</shortName>
        <shortName>Ethylene-forming enzyme</shortName>
        <ecNumber>1.13.12.19</ecNumber>
        <ecNumber>1.14.20.7</ecNumber>
    </recommendedName>
    <alternativeName>
        <fullName>2-oxoglutarate dioxygenase (ethylene-forming)</fullName>
    </alternativeName>
    <alternativeName>
        <fullName>2-oxoglutarate/L-arginine monooxygenase/decarboxylase (succinate-forming)</fullName>
    </alternativeName>
</protein>
<keyword id="KW-0223">Dioxygenase</keyword>
<keyword id="KW-0266">Ethylene biosynthesis</keyword>
<keyword id="KW-0408">Iron</keyword>
<keyword id="KW-0479">Metal-binding</keyword>
<keyword id="KW-0560">Oxidoreductase</keyword>
<keyword id="KW-0614">Plasmid</keyword>
<dbReference type="EC" id="1.13.12.19"/>
<dbReference type="EC" id="1.14.20.7"/>
<dbReference type="EMBL" id="AF101060">
    <property type="protein sequence ID" value="AAD16442.1"/>
    <property type="molecule type" value="Genomic_DNA"/>
</dbReference>
<dbReference type="EMBL" id="AB025277">
    <property type="protein sequence ID" value="BAA94246.1"/>
    <property type="molecule type" value="Genomic_DNA"/>
</dbReference>
<dbReference type="RefSeq" id="WP_004661945.1">
    <property type="nucleotide sequence ID" value="NZ_RBUZ01000303.1"/>
</dbReference>
<dbReference type="SMR" id="Q9Z377"/>
<dbReference type="UniPathway" id="UPA00385"/>
<dbReference type="GO" id="GO:0102276">
    <property type="term" value="F:2-oxoglutarate oxygenase/decarboxylase (ethylene-forming) activity"/>
    <property type="evidence" value="ECO:0007669"/>
    <property type="project" value="UniProtKB-EC"/>
</dbReference>
<dbReference type="GO" id="GO:0051213">
    <property type="term" value="F:dioxygenase activity"/>
    <property type="evidence" value="ECO:0007669"/>
    <property type="project" value="UniProtKB-KW"/>
</dbReference>
<dbReference type="GO" id="GO:0046872">
    <property type="term" value="F:metal ion binding"/>
    <property type="evidence" value="ECO:0007669"/>
    <property type="project" value="UniProtKB-KW"/>
</dbReference>
<dbReference type="GO" id="GO:0009693">
    <property type="term" value="P:ethylene biosynthetic process"/>
    <property type="evidence" value="ECO:0007669"/>
    <property type="project" value="UniProtKB-UniPathway"/>
</dbReference>
<dbReference type="Gene3D" id="2.60.120.330">
    <property type="entry name" value="B-lactam Antibiotic, Isopenicillin N Synthase, Chain"/>
    <property type="match status" value="1"/>
</dbReference>
<dbReference type="InterPro" id="IPR026992">
    <property type="entry name" value="DIOX_N"/>
</dbReference>
<dbReference type="InterPro" id="IPR044861">
    <property type="entry name" value="IPNS-like_FE2OG_OXY"/>
</dbReference>
<dbReference type="InterPro" id="IPR027443">
    <property type="entry name" value="IPNS-like_sf"/>
</dbReference>
<dbReference type="InterPro" id="IPR050231">
    <property type="entry name" value="Iron_ascorbate_oxido_reductase"/>
</dbReference>
<dbReference type="InterPro" id="IPR005123">
    <property type="entry name" value="Oxoglu/Fe-dep_dioxygenase_dom"/>
</dbReference>
<dbReference type="PANTHER" id="PTHR47990">
    <property type="entry name" value="2-OXOGLUTARATE (2OG) AND FE(II)-DEPENDENT OXYGENASE SUPERFAMILY PROTEIN-RELATED"/>
    <property type="match status" value="1"/>
</dbReference>
<dbReference type="Pfam" id="PF03171">
    <property type="entry name" value="2OG-FeII_Oxy"/>
    <property type="match status" value="1"/>
</dbReference>
<dbReference type="Pfam" id="PF14226">
    <property type="entry name" value="DIOX_N"/>
    <property type="match status" value="1"/>
</dbReference>
<dbReference type="SUPFAM" id="SSF51197">
    <property type="entry name" value="Clavaminate synthase-like"/>
    <property type="match status" value="1"/>
</dbReference>
<dbReference type="PROSITE" id="PS51471">
    <property type="entry name" value="FE2OG_OXY"/>
    <property type="match status" value="1"/>
</dbReference>
<organism>
    <name type="scientific">Pseudomonas amygdali pv. sesami</name>
    <name type="common">Pseudomonas syringae pv. sesami</name>
    <dbReference type="NCBI Taxonomy" id="86841"/>
    <lineage>
        <taxon>Bacteria</taxon>
        <taxon>Pseudomonadati</taxon>
        <taxon>Pseudomonadota</taxon>
        <taxon>Gammaproteobacteria</taxon>
        <taxon>Pseudomonadales</taxon>
        <taxon>Pseudomonadaceae</taxon>
        <taxon>Pseudomonas</taxon>
        <taxon>Pseudomonas amygdali</taxon>
    </lineage>
</organism>
<feature type="chain" id="PRO_0000067279" description="2-oxoglutarate-dependent ethylene/succinate-forming enzyme">
    <location>
        <begin position="1"/>
        <end position="350"/>
    </location>
</feature>
<feature type="domain" description="Fe2OG dioxygenase" evidence="2">
    <location>
        <begin position="166"/>
        <end position="286"/>
    </location>
</feature>
<feature type="binding site" evidence="2">
    <location>
        <position position="189"/>
    </location>
    <ligand>
        <name>Fe cation</name>
        <dbReference type="ChEBI" id="CHEBI:24875"/>
    </ligand>
</feature>
<feature type="binding site" evidence="2">
    <location>
        <position position="268"/>
    </location>
    <ligand>
        <name>Fe cation</name>
        <dbReference type="ChEBI" id="CHEBI:24875"/>
    </ligand>
</feature>
<reference key="1">
    <citation type="journal article" date="1999" name="Phytopathology">
        <title>Comparison of ethylene production by Pseudomonas syringae and Ralstonia solanacearum.</title>
        <authorList>
            <person name="Weingart H."/>
            <person name="Voelksch B."/>
            <person name="Ullrich M.S."/>
        </authorList>
        <dbReference type="AGRICOLA" id="IND22019584"/>
    </citation>
    <scope>NUCLEOTIDE SEQUENCE [GENOMIC DNA]</scope>
    <source>
        <strain>962</strain>
    </source>
</reference>
<reference key="2">
    <citation type="submission" date="1999-03" db="EMBL/GenBank/DDBJ databases">
        <authorList>
            <person name="Nagahama K."/>
            <person name="Ogawa T."/>
            <person name="Matsuoka M."/>
        </authorList>
    </citation>
    <scope>NUCLEOTIDE SEQUENCE [GENOMIC DNA]</scope>
</reference>
<name>EFE_PSEAQ</name>
<sequence>MTNLQTFELPTEVTGCAADISLGRALIQAWQKDGIFQIKTDSEQDRKTQEAMAASKQFCKEPLTFKSSCVSDLTYSGYVASGEEVTAGKPDFPEIFTVCKDLSVGDQRVKAGWPCHGPVPWPNNTYQKSMKTFMEELGLAGERLLKLTALGFELPINTFTDLTRDGWHHMRVLRFPPQTSTLSRGIGAHTDYGLLVIAAQDDVGGLYIRPPVEGEKRNRNWLPGESSAGMFEHDEPWTFVTPTPGVWTVFPGDILQFMTGGQLLSTPHKVKLNTRERFACAYFHEPNFEASAYPLFEPSANERIHYGEHFTNMFMRCYPDRITTQSINKENRLAHLEDLKKYSDTRATGS</sequence>
<comment type="function">
    <text evidence="1">Simultaneously catalyzes two reactions, namely formation of ethylene and of succinate from 2-oxoglutarate.</text>
</comment>
<comment type="catalytic activity">
    <reaction>
        <text>2-oxoglutarate + O2 + 2 H(+) = ethene + 3 CO2 + H2O</text>
        <dbReference type="Rhea" id="RHEA:31523"/>
        <dbReference type="ChEBI" id="CHEBI:15377"/>
        <dbReference type="ChEBI" id="CHEBI:15378"/>
        <dbReference type="ChEBI" id="CHEBI:15379"/>
        <dbReference type="ChEBI" id="CHEBI:16526"/>
        <dbReference type="ChEBI" id="CHEBI:16810"/>
        <dbReference type="ChEBI" id="CHEBI:18153"/>
        <dbReference type="EC" id="1.13.12.19"/>
    </reaction>
</comment>
<comment type="catalytic activity">
    <reaction>
        <text>L-arginine + 2-oxoglutarate + O2 = guanidine + L-glutamate 5-semialdehyde + succinate + CO2</text>
        <dbReference type="Rhea" id="RHEA:31535"/>
        <dbReference type="ChEBI" id="CHEBI:15379"/>
        <dbReference type="ChEBI" id="CHEBI:16526"/>
        <dbReference type="ChEBI" id="CHEBI:16810"/>
        <dbReference type="ChEBI" id="CHEBI:30031"/>
        <dbReference type="ChEBI" id="CHEBI:30087"/>
        <dbReference type="ChEBI" id="CHEBI:32682"/>
        <dbReference type="ChEBI" id="CHEBI:58066"/>
        <dbReference type="EC" id="1.14.20.7"/>
    </reaction>
</comment>
<comment type="cofactor">
    <cofactor evidence="1">
        <name>Fe(2+)</name>
        <dbReference type="ChEBI" id="CHEBI:29033"/>
    </cofactor>
</comment>
<comment type="pathway">
    <text>Alkene biosynthesis; ethylene biosynthesis via 2-oxoglutarate.</text>
</comment>
<comment type="subunit">
    <text evidence="1">Monomer.</text>
</comment>
<comment type="miscellaneous">
    <text>A dual-circuit mechanism has been proposed in P.syringae pv phaseolicola for the complete reaction, in which the binding of L-arginine and 2-oxoglutarate in a Schiff-base structure generates a common intermediate for the two reactions.</text>
</comment>
<comment type="miscellaneous">
    <text evidence="4">Encoded on an unnamed plasmid.</text>
</comment>
<comment type="similarity">
    <text evidence="3">Belongs to the iron/ascorbate-dependent oxidoreductase family.</text>
</comment>
<geneLocation type="plasmid"/>
<accession>Q9Z377</accession>
<proteinExistence type="inferred from homology"/>
<gene>
    <name type="primary">efe</name>
</gene>
<evidence type="ECO:0000250" key="1"/>
<evidence type="ECO:0000255" key="2">
    <source>
        <dbReference type="PROSITE-ProRule" id="PRU00805"/>
    </source>
</evidence>
<evidence type="ECO:0000305" key="3"/>
<evidence type="ECO:0000305" key="4">
    <source>
    </source>
</evidence>